<accession>B1X6G8</accession>
<feature type="chain" id="PRO_1000141547" description="Large ribosomal subunit protein uL2">
    <location>
        <begin position="1"/>
        <end position="273"/>
    </location>
</feature>
<feature type="region of interest" description="Disordered" evidence="2">
    <location>
        <begin position="28"/>
        <end position="53"/>
    </location>
</feature>
<feature type="region of interest" description="Disordered" evidence="2">
    <location>
        <begin position="221"/>
        <end position="273"/>
    </location>
</feature>
<feature type="compositionally biased region" description="Low complexity" evidence="2">
    <location>
        <begin position="39"/>
        <end position="48"/>
    </location>
</feature>
<feature type="modified residue" description="N6-acetyllysine" evidence="1">
    <location>
        <position position="242"/>
    </location>
</feature>
<reference key="1">
    <citation type="journal article" date="2008" name="J. Bacteriol.">
        <title>The complete genome sequence of Escherichia coli DH10B: insights into the biology of a laboratory workhorse.</title>
        <authorList>
            <person name="Durfee T."/>
            <person name="Nelson R."/>
            <person name="Baldwin S."/>
            <person name="Plunkett G. III"/>
            <person name="Burland V."/>
            <person name="Mau B."/>
            <person name="Petrosino J.F."/>
            <person name="Qin X."/>
            <person name="Muzny D.M."/>
            <person name="Ayele M."/>
            <person name="Gibbs R.A."/>
            <person name="Csorgo B."/>
            <person name="Posfai G."/>
            <person name="Weinstock G.M."/>
            <person name="Blattner F.R."/>
        </authorList>
    </citation>
    <scope>NUCLEOTIDE SEQUENCE [LARGE SCALE GENOMIC DNA]</scope>
    <source>
        <strain>K12 / DH10B</strain>
    </source>
</reference>
<name>RL2_ECODH</name>
<organism>
    <name type="scientific">Escherichia coli (strain K12 / DH10B)</name>
    <dbReference type="NCBI Taxonomy" id="316385"/>
    <lineage>
        <taxon>Bacteria</taxon>
        <taxon>Pseudomonadati</taxon>
        <taxon>Pseudomonadota</taxon>
        <taxon>Gammaproteobacteria</taxon>
        <taxon>Enterobacterales</taxon>
        <taxon>Enterobacteriaceae</taxon>
        <taxon>Escherichia</taxon>
    </lineage>
</organism>
<keyword id="KW-0007">Acetylation</keyword>
<keyword id="KW-0687">Ribonucleoprotein</keyword>
<keyword id="KW-0689">Ribosomal protein</keyword>
<keyword id="KW-0694">RNA-binding</keyword>
<keyword id="KW-0699">rRNA-binding</keyword>
<gene>
    <name evidence="1" type="primary">rplB</name>
    <name type="ordered locus">ECDH10B_3492</name>
</gene>
<protein>
    <recommendedName>
        <fullName evidence="1">Large ribosomal subunit protein uL2</fullName>
    </recommendedName>
    <alternativeName>
        <fullName evidence="3">50S ribosomal protein L2</fullName>
    </alternativeName>
</protein>
<proteinExistence type="inferred from homology"/>
<comment type="function">
    <text evidence="1">One of the primary rRNA binding proteins. Required for association of the 30S and 50S subunits to form the 70S ribosome, for tRNA binding and peptide bond formation. It has been suggested to have peptidyltransferase activity; this is somewhat controversial. Makes several contacts with the 16S rRNA in the 70S ribosome.</text>
</comment>
<comment type="subunit">
    <text evidence="1">Part of the 50S ribosomal subunit. Forms a bridge to the 30S subunit in the 70S ribosome.</text>
</comment>
<comment type="similarity">
    <text evidence="1">Belongs to the universal ribosomal protein uL2 family.</text>
</comment>
<dbReference type="EMBL" id="CP000948">
    <property type="protein sequence ID" value="ACB04378.1"/>
    <property type="molecule type" value="Genomic_DNA"/>
</dbReference>
<dbReference type="RefSeq" id="WP_000301864.1">
    <property type="nucleotide sequence ID" value="NC_010473.1"/>
</dbReference>
<dbReference type="SMR" id="B1X6G8"/>
<dbReference type="GeneID" id="93778670"/>
<dbReference type="KEGG" id="ecd:ECDH10B_3492"/>
<dbReference type="HOGENOM" id="CLU_036235_2_1_6"/>
<dbReference type="GO" id="GO:0005829">
    <property type="term" value="C:cytosol"/>
    <property type="evidence" value="ECO:0007669"/>
    <property type="project" value="UniProtKB-ARBA"/>
</dbReference>
<dbReference type="GO" id="GO:0015934">
    <property type="term" value="C:large ribosomal subunit"/>
    <property type="evidence" value="ECO:0007669"/>
    <property type="project" value="InterPro"/>
</dbReference>
<dbReference type="GO" id="GO:0019843">
    <property type="term" value="F:rRNA binding"/>
    <property type="evidence" value="ECO:0007669"/>
    <property type="project" value="UniProtKB-UniRule"/>
</dbReference>
<dbReference type="GO" id="GO:0003735">
    <property type="term" value="F:structural constituent of ribosome"/>
    <property type="evidence" value="ECO:0007669"/>
    <property type="project" value="InterPro"/>
</dbReference>
<dbReference type="GO" id="GO:0016740">
    <property type="term" value="F:transferase activity"/>
    <property type="evidence" value="ECO:0007669"/>
    <property type="project" value="InterPro"/>
</dbReference>
<dbReference type="GO" id="GO:0002181">
    <property type="term" value="P:cytoplasmic translation"/>
    <property type="evidence" value="ECO:0007669"/>
    <property type="project" value="TreeGrafter"/>
</dbReference>
<dbReference type="FunFam" id="2.30.30.30:FF:000001">
    <property type="entry name" value="50S ribosomal protein L2"/>
    <property type="match status" value="1"/>
</dbReference>
<dbReference type="FunFam" id="2.40.50.140:FF:000003">
    <property type="entry name" value="50S ribosomal protein L2"/>
    <property type="match status" value="1"/>
</dbReference>
<dbReference type="FunFam" id="4.10.950.10:FF:000001">
    <property type="entry name" value="50S ribosomal protein L2"/>
    <property type="match status" value="1"/>
</dbReference>
<dbReference type="Gene3D" id="2.30.30.30">
    <property type="match status" value="1"/>
</dbReference>
<dbReference type="Gene3D" id="2.40.50.140">
    <property type="entry name" value="Nucleic acid-binding proteins"/>
    <property type="match status" value="1"/>
</dbReference>
<dbReference type="Gene3D" id="4.10.950.10">
    <property type="entry name" value="Ribosomal protein L2, domain 3"/>
    <property type="match status" value="1"/>
</dbReference>
<dbReference type="HAMAP" id="MF_01320_B">
    <property type="entry name" value="Ribosomal_uL2_B"/>
    <property type="match status" value="1"/>
</dbReference>
<dbReference type="InterPro" id="IPR012340">
    <property type="entry name" value="NA-bd_OB-fold"/>
</dbReference>
<dbReference type="InterPro" id="IPR014722">
    <property type="entry name" value="Rib_uL2_dom2"/>
</dbReference>
<dbReference type="InterPro" id="IPR002171">
    <property type="entry name" value="Ribosomal_uL2"/>
</dbReference>
<dbReference type="InterPro" id="IPR005880">
    <property type="entry name" value="Ribosomal_uL2_bac/org-type"/>
</dbReference>
<dbReference type="InterPro" id="IPR022669">
    <property type="entry name" value="Ribosomal_uL2_C"/>
</dbReference>
<dbReference type="InterPro" id="IPR022671">
    <property type="entry name" value="Ribosomal_uL2_CS"/>
</dbReference>
<dbReference type="InterPro" id="IPR014726">
    <property type="entry name" value="Ribosomal_uL2_dom3"/>
</dbReference>
<dbReference type="InterPro" id="IPR022666">
    <property type="entry name" value="Ribosomal_uL2_RNA-bd_dom"/>
</dbReference>
<dbReference type="InterPro" id="IPR008991">
    <property type="entry name" value="Translation_prot_SH3-like_sf"/>
</dbReference>
<dbReference type="NCBIfam" id="TIGR01171">
    <property type="entry name" value="rplB_bact"/>
    <property type="match status" value="1"/>
</dbReference>
<dbReference type="PANTHER" id="PTHR13691:SF5">
    <property type="entry name" value="LARGE RIBOSOMAL SUBUNIT PROTEIN UL2M"/>
    <property type="match status" value="1"/>
</dbReference>
<dbReference type="PANTHER" id="PTHR13691">
    <property type="entry name" value="RIBOSOMAL PROTEIN L2"/>
    <property type="match status" value="1"/>
</dbReference>
<dbReference type="Pfam" id="PF00181">
    <property type="entry name" value="Ribosomal_L2"/>
    <property type="match status" value="1"/>
</dbReference>
<dbReference type="Pfam" id="PF03947">
    <property type="entry name" value="Ribosomal_L2_C"/>
    <property type="match status" value="1"/>
</dbReference>
<dbReference type="PIRSF" id="PIRSF002158">
    <property type="entry name" value="Ribosomal_L2"/>
    <property type="match status" value="1"/>
</dbReference>
<dbReference type="SMART" id="SM01383">
    <property type="entry name" value="Ribosomal_L2"/>
    <property type="match status" value="1"/>
</dbReference>
<dbReference type="SMART" id="SM01382">
    <property type="entry name" value="Ribosomal_L2_C"/>
    <property type="match status" value="1"/>
</dbReference>
<dbReference type="SUPFAM" id="SSF50249">
    <property type="entry name" value="Nucleic acid-binding proteins"/>
    <property type="match status" value="1"/>
</dbReference>
<dbReference type="SUPFAM" id="SSF50104">
    <property type="entry name" value="Translation proteins SH3-like domain"/>
    <property type="match status" value="1"/>
</dbReference>
<dbReference type="PROSITE" id="PS00467">
    <property type="entry name" value="RIBOSOMAL_L2"/>
    <property type="match status" value="1"/>
</dbReference>
<sequence length="273" mass="29860">MAVVKCKPTSPGRRHVVKVVNPELHKGKPFAPLLEKNSKSGGRNNNGRITTRHIGGGHKQAYRIVDFKRNKDGIPAVVERLEYDPNRSANIALVLYKDGERRYILAPKGLKAGDQIQSGVDAAIKPGNTLPMRNIPVGSTVHNVEMKPGKGGQLARSAGTYVQIVARDGAYVTLRLRSGEMRKVEADCRATLGEVGNAEHMLRVLGKAGAARWRGVRPTVRGTAMNPVDHPHGGGEGRNFGKHPVTPWGVQTKGKKTRSNKRTDKFIVRRRSK</sequence>
<evidence type="ECO:0000255" key="1">
    <source>
        <dbReference type="HAMAP-Rule" id="MF_01320"/>
    </source>
</evidence>
<evidence type="ECO:0000256" key="2">
    <source>
        <dbReference type="SAM" id="MobiDB-lite"/>
    </source>
</evidence>
<evidence type="ECO:0000305" key="3"/>